<keyword id="KW-0028">Amino-acid biosynthesis</keyword>
<keyword id="KW-0963">Cytoplasm</keyword>
<keyword id="KW-0368">Histidine biosynthesis</keyword>
<keyword id="KW-0456">Lyase</keyword>
<keyword id="KW-1185">Reference proteome</keyword>
<comment type="catalytic activity">
    <reaction evidence="1">
        <text>D-erythro-1-(imidazol-4-yl)glycerol 3-phosphate = 3-(imidazol-4-yl)-2-oxopropyl phosphate + H2O</text>
        <dbReference type="Rhea" id="RHEA:11040"/>
        <dbReference type="ChEBI" id="CHEBI:15377"/>
        <dbReference type="ChEBI" id="CHEBI:57766"/>
        <dbReference type="ChEBI" id="CHEBI:58278"/>
        <dbReference type="EC" id="4.2.1.19"/>
    </reaction>
</comment>
<comment type="pathway">
    <text evidence="1">Amino-acid biosynthesis; L-histidine biosynthesis; L-histidine from 5-phospho-alpha-D-ribose 1-diphosphate: step 6/9.</text>
</comment>
<comment type="subcellular location">
    <subcellularLocation>
        <location evidence="1">Cytoplasm</location>
    </subcellularLocation>
</comment>
<comment type="similarity">
    <text evidence="1">Belongs to the imidazoleglycerol-phosphate dehydratase family.</text>
</comment>
<dbReference type="EC" id="4.2.1.19" evidence="1"/>
<dbReference type="EMBL" id="AE007869">
    <property type="protein sequence ID" value="AAK85867.2"/>
    <property type="molecule type" value="Genomic_DNA"/>
</dbReference>
<dbReference type="PIR" id="AD2582">
    <property type="entry name" value="AD2582"/>
</dbReference>
<dbReference type="PIR" id="B97364">
    <property type="entry name" value="B97364"/>
</dbReference>
<dbReference type="RefSeq" id="NP_353082.2">
    <property type="nucleotide sequence ID" value="NC_003062.2"/>
</dbReference>
<dbReference type="RefSeq" id="WP_010970622.1">
    <property type="nucleotide sequence ID" value="NC_003062.2"/>
</dbReference>
<dbReference type="SMR" id="Q8UJ89"/>
<dbReference type="STRING" id="176299.Atu0043"/>
<dbReference type="EnsemblBacteria" id="AAK85867">
    <property type="protein sequence ID" value="AAK85867"/>
    <property type="gene ID" value="Atu0043"/>
</dbReference>
<dbReference type="GeneID" id="79862684"/>
<dbReference type="KEGG" id="atu:Atu0043"/>
<dbReference type="PATRIC" id="fig|176299.10.peg.43"/>
<dbReference type="eggNOG" id="COG0131">
    <property type="taxonomic scope" value="Bacteria"/>
</dbReference>
<dbReference type="HOGENOM" id="CLU_044308_3_0_5"/>
<dbReference type="OrthoDB" id="9813612at2"/>
<dbReference type="PhylomeDB" id="Q8UJ89"/>
<dbReference type="BioCyc" id="AGRO:ATU0043-MONOMER"/>
<dbReference type="UniPathway" id="UPA00031">
    <property type="reaction ID" value="UER00011"/>
</dbReference>
<dbReference type="Proteomes" id="UP000000813">
    <property type="component" value="Chromosome circular"/>
</dbReference>
<dbReference type="GO" id="GO:0005737">
    <property type="term" value="C:cytoplasm"/>
    <property type="evidence" value="ECO:0007669"/>
    <property type="project" value="UniProtKB-SubCell"/>
</dbReference>
<dbReference type="GO" id="GO:0004424">
    <property type="term" value="F:imidazoleglycerol-phosphate dehydratase activity"/>
    <property type="evidence" value="ECO:0007669"/>
    <property type="project" value="UniProtKB-UniRule"/>
</dbReference>
<dbReference type="GO" id="GO:0000105">
    <property type="term" value="P:L-histidine biosynthetic process"/>
    <property type="evidence" value="ECO:0007669"/>
    <property type="project" value="UniProtKB-UniRule"/>
</dbReference>
<dbReference type="CDD" id="cd07914">
    <property type="entry name" value="IGPD"/>
    <property type="match status" value="1"/>
</dbReference>
<dbReference type="FunFam" id="3.30.230.40:FF:000001">
    <property type="entry name" value="Imidazoleglycerol-phosphate dehydratase HisB"/>
    <property type="match status" value="1"/>
</dbReference>
<dbReference type="FunFam" id="3.30.230.40:FF:000003">
    <property type="entry name" value="Imidazoleglycerol-phosphate dehydratase HisB"/>
    <property type="match status" value="1"/>
</dbReference>
<dbReference type="Gene3D" id="3.30.230.40">
    <property type="entry name" value="Imidazole glycerol phosphate dehydratase, domain 1"/>
    <property type="match status" value="2"/>
</dbReference>
<dbReference type="HAMAP" id="MF_00076">
    <property type="entry name" value="HisB"/>
    <property type="match status" value="1"/>
</dbReference>
<dbReference type="InterPro" id="IPR038494">
    <property type="entry name" value="IGPD_sf"/>
</dbReference>
<dbReference type="InterPro" id="IPR000807">
    <property type="entry name" value="ImidazoleglycerolP_deHydtase"/>
</dbReference>
<dbReference type="InterPro" id="IPR020565">
    <property type="entry name" value="ImidazoleglycerP_deHydtase_CS"/>
</dbReference>
<dbReference type="InterPro" id="IPR020568">
    <property type="entry name" value="Ribosomal_Su5_D2-typ_SF"/>
</dbReference>
<dbReference type="NCBIfam" id="NF002109">
    <property type="entry name" value="PRK00951.1-5"/>
    <property type="match status" value="1"/>
</dbReference>
<dbReference type="NCBIfam" id="NF002111">
    <property type="entry name" value="PRK00951.2-1"/>
    <property type="match status" value="1"/>
</dbReference>
<dbReference type="NCBIfam" id="NF002114">
    <property type="entry name" value="PRK00951.2-4"/>
    <property type="match status" value="1"/>
</dbReference>
<dbReference type="PANTHER" id="PTHR23133:SF2">
    <property type="entry name" value="IMIDAZOLEGLYCEROL-PHOSPHATE DEHYDRATASE"/>
    <property type="match status" value="1"/>
</dbReference>
<dbReference type="PANTHER" id="PTHR23133">
    <property type="entry name" value="IMIDAZOLEGLYCEROL-PHOSPHATE DEHYDRATASE HIS7"/>
    <property type="match status" value="1"/>
</dbReference>
<dbReference type="Pfam" id="PF00475">
    <property type="entry name" value="IGPD"/>
    <property type="match status" value="1"/>
</dbReference>
<dbReference type="SUPFAM" id="SSF54211">
    <property type="entry name" value="Ribosomal protein S5 domain 2-like"/>
    <property type="match status" value="2"/>
</dbReference>
<dbReference type="PROSITE" id="PS00954">
    <property type="entry name" value="IGP_DEHYDRATASE_1"/>
    <property type="match status" value="1"/>
</dbReference>
<dbReference type="PROSITE" id="PS00955">
    <property type="entry name" value="IGP_DEHYDRATASE_2"/>
    <property type="match status" value="1"/>
</dbReference>
<feature type="chain" id="PRO_0000158097" description="Imidazoleglycerol-phosphate dehydratase">
    <location>
        <begin position="1"/>
        <end position="198"/>
    </location>
</feature>
<evidence type="ECO:0000255" key="1">
    <source>
        <dbReference type="HAMAP-Rule" id="MF_00076"/>
    </source>
</evidence>
<protein>
    <recommendedName>
        <fullName evidence="1">Imidazoleglycerol-phosphate dehydratase</fullName>
        <shortName evidence="1">IGPD</shortName>
        <ecNumber evidence="1">4.2.1.19</ecNumber>
    </recommendedName>
</protein>
<proteinExistence type="inferred from homology"/>
<reference key="1">
    <citation type="journal article" date="2001" name="Science">
        <title>The genome of the natural genetic engineer Agrobacterium tumefaciens C58.</title>
        <authorList>
            <person name="Wood D.W."/>
            <person name="Setubal J.C."/>
            <person name="Kaul R."/>
            <person name="Monks D.E."/>
            <person name="Kitajima J.P."/>
            <person name="Okura V.K."/>
            <person name="Zhou Y."/>
            <person name="Chen L."/>
            <person name="Wood G.E."/>
            <person name="Almeida N.F. Jr."/>
            <person name="Woo L."/>
            <person name="Chen Y."/>
            <person name="Paulsen I.T."/>
            <person name="Eisen J.A."/>
            <person name="Karp P.D."/>
            <person name="Bovee D. Sr."/>
            <person name="Chapman P."/>
            <person name="Clendenning J."/>
            <person name="Deatherage G."/>
            <person name="Gillet W."/>
            <person name="Grant C."/>
            <person name="Kutyavin T."/>
            <person name="Levy R."/>
            <person name="Li M.-J."/>
            <person name="McClelland E."/>
            <person name="Palmieri A."/>
            <person name="Raymond C."/>
            <person name="Rouse G."/>
            <person name="Saenphimmachak C."/>
            <person name="Wu Z."/>
            <person name="Romero P."/>
            <person name="Gordon D."/>
            <person name="Zhang S."/>
            <person name="Yoo H."/>
            <person name="Tao Y."/>
            <person name="Biddle P."/>
            <person name="Jung M."/>
            <person name="Krespan W."/>
            <person name="Perry M."/>
            <person name="Gordon-Kamm B."/>
            <person name="Liao L."/>
            <person name="Kim S."/>
            <person name="Hendrick C."/>
            <person name="Zhao Z.-Y."/>
            <person name="Dolan M."/>
            <person name="Chumley F."/>
            <person name="Tingey S.V."/>
            <person name="Tomb J.-F."/>
            <person name="Gordon M.P."/>
            <person name="Olson M.V."/>
            <person name="Nester E.W."/>
        </authorList>
    </citation>
    <scope>NUCLEOTIDE SEQUENCE [LARGE SCALE GENOMIC DNA]</scope>
    <source>
        <strain>C58 / ATCC 33970</strain>
    </source>
</reference>
<reference key="2">
    <citation type="journal article" date="2001" name="Science">
        <title>Genome sequence of the plant pathogen and biotechnology agent Agrobacterium tumefaciens C58.</title>
        <authorList>
            <person name="Goodner B."/>
            <person name="Hinkle G."/>
            <person name="Gattung S."/>
            <person name="Miller N."/>
            <person name="Blanchard M."/>
            <person name="Qurollo B."/>
            <person name="Goldman B.S."/>
            <person name="Cao Y."/>
            <person name="Askenazi M."/>
            <person name="Halling C."/>
            <person name="Mullin L."/>
            <person name="Houmiel K."/>
            <person name="Gordon J."/>
            <person name="Vaudin M."/>
            <person name="Iartchouk O."/>
            <person name="Epp A."/>
            <person name="Liu F."/>
            <person name="Wollam C."/>
            <person name="Allinger M."/>
            <person name="Doughty D."/>
            <person name="Scott C."/>
            <person name="Lappas C."/>
            <person name="Markelz B."/>
            <person name="Flanagan C."/>
            <person name="Crowell C."/>
            <person name="Gurson J."/>
            <person name="Lomo C."/>
            <person name="Sear C."/>
            <person name="Strub G."/>
            <person name="Cielo C."/>
            <person name="Slater S."/>
        </authorList>
    </citation>
    <scope>NUCLEOTIDE SEQUENCE [LARGE SCALE GENOMIC DNA]</scope>
    <source>
        <strain>C58 / ATCC 33970</strain>
    </source>
</reference>
<accession>Q8UJ89</accession>
<sequence>MAERKGEIIRKTNETSVSVRVDIDGTGKSKISTGVGFFDHMLDQLSRHSLIDMDIEVQGDLHIDDHHTVEDTGIAIGQAIAKALGDRRGITRYASLDLAMDETMTKAAVDISGRPFLVWNVNFSAPKIGTFDTELVREFFQALAQNAGITLHILNHYGANNHHIAETCFKAVARVLRTATEIDPRQAGRVPSTKGMLA</sequence>
<organism>
    <name type="scientific">Agrobacterium fabrum (strain C58 / ATCC 33970)</name>
    <name type="common">Agrobacterium tumefaciens (strain C58)</name>
    <dbReference type="NCBI Taxonomy" id="176299"/>
    <lineage>
        <taxon>Bacteria</taxon>
        <taxon>Pseudomonadati</taxon>
        <taxon>Pseudomonadota</taxon>
        <taxon>Alphaproteobacteria</taxon>
        <taxon>Hyphomicrobiales</taxon>
        <taxon>Rhizobiaceae</taxon>
        <taxon>Rhizobium/Agrobacterium group</taxon>
        <taxon>Agrobacterium</taxon>
        <taxon>Agrobacterium tumefaciens complex</taxon>
    </lineage>
</organism>
<name>HIS7_AGRFC</name>
<gene>
    <name evidence="1" type="primary">hisB</name>
    <name type="ordered locus">Atu0043</name>
    <name type="ORF">AGR_C_69</name>
</gene>